<accession>Q9JSM2</accession>
<accession>A1IU46</accession>
<feature type="chain" id="PRO_0000171498" description="Small ribosomal subunit biogenesis GTPase RsgA">
    <location>
        <begin position="1"/>
        <end position="307"/>
    </location>
</feature>
<feature type="domain" description="CP-type G" evidence="2">
    <location>
        <begin position="85"/>
        <end position="242"/>
    </location>
</feature>
<feature type="region of interest" description="Disordered" evidence="3">
    <location>
        <begin position="1"/>
        <end position="20"/>
    </location>
</feature>
<feature type="compositionally biased region" description="Polar residues" evidence="3">
    <location>
        <begin position="10"/>
        <end position="20"/>
    </location>
</feature>
<feature type="binding site" evidence="1">
    <location>
        <begin position="135"/>
        <end position="138"/>
    </location>
    <ligand>
        <name>GTP</name>
        <dbReference type="ChEBI" id="CHEBI:37565"/>
    </ligand>
</feature>
<feature type="binding site" evidence="1">
    <location>
        <begin position="184"/>
        <end position="192"/>
    </location>
    <ligand>
        <name>GTP</name>
        <dbReference type="ChEBI" id="CHEBI:37565"/>
    </ligand>
</feature>
<feature type="binding site" evidence="1">
    <location>
        <position position="266"/>
    </location>
    <ligand>
        <name>Zn(2+)</name>
        <dbReference type="ChEBI" id="CHEBI:29105"/>
    </ligand>
</feature>
<feature type="binding site" evidence="1">
    <location>
        <position position="271"/>
    </location>
    <ligand>
        <name>Zn(2+)</name>
        <dbReference type="ChEBI" id="CHEBI:29105"/>
    </ligand>
</feature>
<feature type="binding site" evidence="1">
    <location>
        <position position="273"/>
    </location>
    <ligand>
        <name>Zn(2+)</name>
        <dbReference type="ChEBI" id="CHEBI:29105"/>
    </ligand>
</feature>
<feature type="binding site" evidence="1">
    <location>
        <position position="279"/>
    </location>
    <ligand>
        <name>Zn(2+)</name>
        <dbReference type="ChEBI" id="CHEBI:29105"/>
    </ligand>
</feature>
<dbReference type="EC" id="3.6.1.-" evidence="1"/>
<dbReference type="EMBL" id="AL157959">
    <property type="protein sequence ID" value="CAM09316.1"/>
    <property type="molecule type" value="Genomic_DNA"/>
</dbReference>
<dbReference type="PIR" id="C81796">
    <property type="entry name" value="C81796"/>
</dbReference>
<dbReference type="RefSeq" id="WP_002226945.1">
    <property type="nucleotide sequence ID" value="NC_003116.1"/>
</dbReference>
<dbReference type="SMR" id="Q9JSM2"/>
<dbReference type="EnsemblBacteria" id="CAM09316">
    <property type="protein sequence ID" value="CAM09316"/>
    <property type="gene ID" value="NMA2224"/>
</dbReference>
<dbReference type="GeneID" id="93387353"/>
<dbReference type="KEGG" id="nma:NMA2224"/>
<dbReference type="HOGENOM" id="CLU_033617_2_0_4"/>
<dbReference type="Proteomes" id="UP000000626">
    <property type="component" value="Chromosome"/>
</dbReference>
<dbReference type="GO" id="GO:0005737">
    <property type="term" value="C:cytoplasm"/>
    <property type="evidence" value="ECO:0007669"/>
    <property type="project" value="UniProtKB-SubCell"/>
</dbReference>
<dbReference type="GO" id="GO:0005525">
    <property type="term" value="F:GTP binding"/>
    <property type="evidence" value="ECO:0007669"/>
    <property type="project" value="UniProtKB-UniRule"/>
</dbReference>
<dbReference type="GO" id="GO:0003924">
    <property type="term" value="F:GTPase activity"/>
    <property type="evidence" value="ECO:0007669"/>
    <property type="project" value="UniProtKB-UniRule"/>
</dbReference>
<dbReference type="GO" id="GO:0046872">
    <property type="term" value="F:metal ion binding"/>
    <property type="evidence" value="ECO:0007669"/>
    <property type="project" value="UniProtKB-KW"/>
</dbReference>
<dbReference type="GO" id="GO:0019843">
    <property type="term" value="F:rRNA binding"/>
    <property type="evidence" value="ECO:0007669"/>
    <property type="project" value="UniProtKB-KW"/>
</dbReference>
<dbReference type="GO" id="GO:0042274">
    <property type="term" value="P:ribosomal small subunit biogenesis"/>
    <property type="evidence" value="ECO:0007669"/>
    <property type="project" value="UniProtKB-UniRule"/>
</dbReference>
<dbReference type="CDD" id="cd01854">
    <property type="entry name" value="YjeQ_EngC"/>
    <property type="match status" value="1"/>
</dbReference>
<dbReference type="Gene3D" id="3.40.50.300">
    <property type="entry name" value="P-loop containing nucleotide triphosphate hydrolases"/>
    <property type="match status" value="1"/>
</dbReference>
<dbReference type="Gene3D" id="1.10.40.50">
    <property type="entry name" value="Probable gtpase engc, domain 3"/>
    <property type="match status" value="1"/>
</dbReference>
<dbReference type="HAMAP" id="MF_01820">
    <property type="entry name" value="GTPase_RsgA"/>
    <property type="match status" value="1"/>
</dbReference>
<dbReference type="InterPro" id="IPR030378">
    <property type="entry name" value="G_CP_dom"/>
</dbReference>
<dbReference type="InterPro" id="IPR027417">
    <property type="entry name" value="P-loop_NTPase"/>
</dbReference>
<dbReference type="InterPro" id="IPR004881">
    <property type="entry name" value="Ribosome_biogen_GTPase_RsgA"/>
</dbReference>
<dbReference type="InterPro" id="IPR010914">
    <property type="entry name" value="RsgA_GTPase_dom"/>
</dbReference>
<dbReference type="NCBIfam" id="TIGR00157">
    <property type="entry name" value="ribosome small subunit-dependent GTPase A"/>
    <property type="match status" value="1"/>
</dbReference>
<dbReference type="PANTHER" id="PTHR32120">
    <property type="entry name" value="SMALL RIBOSOMAL SUBUNIT BIOGENESIS GTPASE RSGA"/>
    <property type="match status" value="1"/>
</dbReference>
<dbReference type="PANTHER" id="PTHR32120:SF11">
    <property type="entry name" value="SMALL RIBOSOMAL SUBUNIT BIOGENESIS GTPASE RSGA 1, MITOCHONDRIAL-RELATED"/>
    <property type="match status" value="1"/>
</dbReference>
<dbReference type="Pfam" id="PF03193">
    <property type="entry name" value="RsgA_GTPase"/>
    <property type="match status" value="1"/>
</dbReference>
<dbReference type="SUPFAM" id="SSF52540">
    <property type="entry name" value="P-loop containing nucleoside triphosphate hydrolases"/>
    <property type="match status" value="1"/>
</dbReference>
<dbReference type="PROSITE" id="PS50936">
    <property type="entry name" value="ENGC_GTPASE"/>
    <property type="match status" value="1"/>
</dbReference>
<dbReference type="PROSITE" id="PS51721">
    <property type="entry name" value="G_CP"/>
    <property type="match status" value="1"/>
</dbReference>
<sequence>MPSEHPFSDGISTPNPKETMNDTAQITASYGRRYIVRTPDGTTYEASTRKKRVDFACGDRVRISPVNAEQVVIEDFLPRQSLLYRQDAWKTKLIAANVTQLLIVTAAVPSPSVRLLQRALLAAEAAGIRAVIVLNKADLPETALWREKLKFYETLGYPVIETRALENAGSLRPALQGHSNILLGQSGMGKSTLTNALLGSQTARTGDISAALDSGKHTTTHARLYDLNGETQLIDSPGLQEFGLHHLQAADLPRYFPDFRHLVGQCRFHNCTHRAEPGCAFKAAAETRAASPERLAFLQGITDELPG</sequence>
<keyword id="KW-0963">Cytoplasm</keyword>
<keyword id="KW-0342">GTP-binding</keyword>
<keyword id="KW-0378">Hydrolase</keyword>
<keyword id="KW-0479">Metal-binding</keyword>
<keyword id="KW-0547">Nucleotide-binding</keyword>
<keyword id="KW-0690">Ribosome biogenesis</keyword>
<keyword id="KW-0694">RNA-binding</keyword>
<keyword id="KW-0699">rRNA-binding</keyword>
<keyword id="KW-0862">Zinc</keyword>
<gene>
    <name evidence="1" type="primary">rsgA</name>
    <name type="ordered locus">NMA2224</name>
</gene>
<evidence type="ECO:0000255" key="1">
    <source>
        <dbReference type="HAMAP-Rule" id="MF_01820"/>
    </source>
</evidence>
<evidence type="ECO:0000255" key="2">
    <source>
        <dbReference type="PROSITE-ProRule" id="PRU01058"/>
    </source>
</evidence>
<evidence type="ECO:0000256" key="3">
    <source>
        <dbReference type="SAM" id="MobiDB-lite"/>
    </source>
</evidence>
<organism>
    <name type="scientific">Neisseria meningitidis serogroup A / serotype 4A (strain DSM 15465 / Z2491)</name>
    <dbReference type="NCBI Taxonomy" id="122587"/>
    <lineage>
        <taxon>Bacteria</taxon>
        <taxon>Pseudomonadati</taxon>
        <taxon>Pseudomonadota</taxon>
        <taxon>Betaproteobacteria</taxon>
        <taxon>Neisseriales</taxon>
        <taxon>Neisseriaceae</taxon>
        <taxon>Neisseria</taxon>
    </lineage>
</organism>
<name>RSGA_NEIMA</name>
<reference key="1">
    <citation type="journal article" date="2000" name="Nature">
        <title>Complete DNA sequence of a serogroup A strain of Neisseria meningitidis Z2491.</title>
        <authorList>
            <person name="Parkhill J."/>
            <person name="Achtman M."/>
            <person name="James K.D."/>
            <person name="Bentley S.D."/>
            <person name="Churcher C.M."/>
            <person name="Klee S.R."/>
            <person name="Morelli G."/>
            <person name="Basham D."/>
            <person name="Brown D."/>
            <person name="Chillingworth T."/>
            <person name="Davies R.M."/>
            <person name="Davis P."/>
            <person name="Devlin K."/>
            <person name="Feltwell T."/>
            <person name="Hamlin N."/>
            <person name="Holroyd S."/>
            <person name="Jagels K."/>
            <person name="Leather S."/>
            <person name="Moule S."/>
            <person name="Mungall K.L."/>
            <person name="Quail M.A."/>
            <person name="Rajandream M.A."/>
            <person name="Rutherford K.M."/>
            <person name="Simmonds M."/>
            <person name="Skelton J."/>
            <person name="Whitehead S."/>
            <person name="Spratt B.G."/>
            <person name="Barrell B.G."/>
        </authorList>
    </citation>
    <scope>NUCLEOTIDE SEQUENCE [LARGE SCALE GENOMIC DNA]</scope>
    <source>
        <strain>DSM 15465 / Z2491</strain>
    </source>
</reference>
<protein>
    <recommendedName>
        <fullName evidence="1">Small ribosomal subunit biogenesis GTPase RsgA</fullName>
        <ecNumber evidence="1">3.6.1.-</ecNumber>
    </recommendedName>
</protein>
<comment type="function">
    <text evidence="1">One of several proteins that assist in the late maturation steps of the functional core of the 30S ribosomal subunit. Helps release RbfA from mature subunits. May play a role in the assembly of ribosomal proteins into the subunit. Circularly permuted GTPase that catalyzes slow GTP hydrolysis, GTPase activity is stimulated by the 30S ribosomal subunit.</text>
</comment>
<comment type="cofactor">
    <cofactor evidence="1">
        <name>Zn(2+)</name>
        <dbReference type="ChEBI" id="CHEBI:29105"/>
    </cofactor>
    <text evidence="1">Binds 1 zinc ion per subunit.</text>
</comment>
<comment type="subunit">
    <text evidence="1">Monomer. Associates with 30S ribosomal subunit, binds 16S rRNA.</text>
</comment>
<comment type="subcellular location">
    <subcellularLocation>
        <location evidence="1">Cytoplasm</location>
    </subcellularLocation>
</comment>
<comment type="similarity">
    <text evidence="1">Belongs to the TRAFAC class YlqF/YawG GTPase family. RsgA subfamily.</text>
</comment>
<proteinExistence type="inferred from homology"/>